<name>SURE_PSEA8</name>
<keyword id="KW-0963">Cytoplasm</keyword>
<keyword id="KW-0378">Hydrolase</keyword>
<keyword id="KW-0479">Metal-binding</keyword>
<keyword id="KW-0547">Nucleotide-binding</keyword>
<protein>
    <recommendedName>
        <fullName evidence="1">5'-nucleotidase SurE</fullName>
        <ecNumber evidence="1">3.1.3.5</ecNumber>
    </recommendedName>
    <alternativeName>
        <fullName evidence="1">Nucleoside 5'-monophosphate phosphohydrolase</fullName>
    </alternativeName>
</protein>
<proteinExistence type="inferred from homology"/>
<dbReference type="EC" id="3.1.3.5" evidence="1"/>
<dbReference type="EMBL" id="FM209186">
    <property type="protein sequence ID" value="CAW26138.1"/>
    <property type="molecule type" value="Genomic_DNA"/>
</dbReference>
<dbReference type="RefSeq" id="WP_012613729.1">
    <property type="nucleotide sequence ID" value="NC_011770.1"/>
</dbReference>
<dbReference type="SMR" id="B7V8C4"/>
<dbReference type="KEGG" id="pag:PLES_14101"/>
<dbReference type="HOGENOM" id="CLU_045192_1_2_6"/>
<dbReference type="GO" id="GO:0005737">
    <property type="term" value="C:cytoplasm"/>
    <property type="evidence" value="ECO:0007669"/>
    <property type="project" value="UniProtKB-SubCell"/>
</dbReference>
<dbReference type="GO" id="GO:0008254">
    <property type="term" value="F:3'-nucleotidase activity"/>
    <property type="evidence" value="ECO:0007669"/>
    <property type="project" value="TreeGrafter"/>
</dbReference>
<dbReference type="GO" id="GO:0008253">
    <property type="term" value="F:5'-nucleotidase activity"/>
    <property type="evidence" value="ECO:0007669"/>
    <property type="project" value="UniProtKB-UniRule"/>
</dbReference>
<dbReference type="GO" id="GO:0004309">
    <property type="term" value="F:exopolyphosphatase activity"/>
    <property type="evidence" value="ECO:0007669"/>
    <property type="project" value="TreeGrafter"/>
</dbReference>
<dbReference type="GO" id="GO:0046872">
    <property type="term" value="F:metal ion binding"/>
    <property type="evidence" value="ECO:0007669"/>
    <property type="project" value="UniProtKB-UniRule"/>
</dbReference>
<dbReference type="GO" id="GO:0000166">
    <property type="term" value="F:nucleotide binding"/>
    <property type="evidence" value="ECO:0007669"/>
    <property type="project" value="UniProtKB-KW"/>
</dbReference>
<dbReference type="FunFam" id="3.40.1210.10:FF:000001">
    <property type="entry name" value="5'/3'-nucleotidase SurE"/>
    <property type="match status" value="1"/>
</dbReference>
<dbReference type="Gene3D" id="3.40.1210.10">
    <property type="entry name" value="Survival protein SurE-like phosphatase/nucleotidase"/>
    <property type="match status" value="1"/>
</dbReference>
<dbReference type="HAMAP" id="MF_00060">
    <property type="entry name" value="SurE"/>
    <property type="match status" value="1"/>
</dbReference>
<dbReference type="InterPro" id="IPR030048">
    <property type="entry name" value="SurE"/>
</dbReference>
<dbReference type="InterPro" id="IPR002828">
    <property type="entry name" value="SurE-like_Pase/nucleotidase"/>
</dbReference>
<dbReference type="InterPro" id="IPR036523">
    <property type="entry name" value="SurE-like_sf"/>
</dbReference>
<dbReference type="NCBIfam" id="NF001489">
    <property type="entry name" value="PRK00346.1-3"/>
    <property type="match status" value="1"/>
</dbReference>
<dbReference type="NCBIfam" id="NF001490">
    <property type="entry name" value="PRK00346.1-4"/>
    <property type="match status" value="1"/>
</dbReference>
<dbReference type="NCBIfam" id="TIGR00087">
    <property type="entry name" value="surE"/>
    <property type="match status" value="1"/>
</dbReference>
<dbReference type="PANTHER" id="PTHR30457">
    <property type="entry name" value="5'-NUCLEOTIDASE SURE"/>
    <property type="match status" value="1"/>
</dbReference>
<dbReference type="PANTHER" id="PTHR30457:SF12">
    <property type="entry name" value="5'_3'-NUCLEOTIDASE SURE"/>
    <property type="match status" value="1"/>
</dbReference>
<dbReference type="Pfam" id="PF01975">
    <property type="entry name" value="SurE"/>
    <property type="match status" value="1"/>
</dbReference>
<dbReference type="SUPFAM" id="SSF64167">
    <property type="entry name" value="SurE-like"/>
    <property type="match status" value="1"/>
</dbReference>
<comment type="function">
    <text evidence="1">Nucleotidase that shows phosphatase activity on nucleoside 5'-monophosphates.</text>
</comment>
<comment type="catalytic activity">
    <reaction evidence="1">
        <text>a ribonucleoside 5'-phosphate + H2O = a ribonucleoside + phosphate</text>
        <dbReference type="Rhea" id="RHEA:12484"/>
        <dbReference type="ChEBI" id="CHEBI:15377"/>
        <dbReference type="ChEBI" id="CHEBI:18254"/>
        <dbReference type="ChEBI" id="CHEBI:43474"/>
        <dbReference type="ChEBI" id="CHEBI:58043"/>
        <dbReference type="EC" id="3.1.3.5"/>
    </reaction>
</comment>
<comment type="cofactor">
    <cofactor evidence="1">
        <name>a divalent metal cation</name>
        <dbReference type="ChEBI" id="CHEBI:60240"/>
    </cofactor>
    <text evidence="1">Binds 1 divalent metal cation per subunit.</text>
</comment>
<comment type="subcellular location">
    <subcellularLocation>
        <location evidence="1">Cytoplasm</location>
    </subcellularLocation>
</comment>
<comment type="similarity">
    <text evidence="1">Belongs to the SurE nucleotidase family.</text>
</comment>
<feature type="chain" id="PRO_1000196612" description="5'-nucleotidase SurE">
    <location>
        <begin position="1"/>
        <end position="249"/>
    </location>
</feature>
<feature type="binding site" evidence="1">
    <location>
        <position position="8"/>
    </location>
    <ligand>
        <name>a divalent metal cation</name>
        <dbReference type="ChEBI" id="CHEBI:60240"/>
    </ligand>
</feature>
<feature type="binding site" evidence="1">
    <location>
        <position position="9"/>
    </location>
    <ligand>
        <name>a divalent metal cation</name>
        <dbReference type="ChEBI" id="CHEBI:60240"/>
    </ligand>
</feature>
<feature type="binding site" evidence="1">
    <location>
        <position position="39"/>
    </location>
    <ligand>
        <name>a divalent metal cation</name>
        <dbReference type="ChEBI" id="CHEBI:60240"/>
    </ligand>
</feature>
<feature type="binding site" evidence="1">
    <location>
        <position position="91"/>
    </location>
    <ligand>
        <name>a divalent metal cation</name>
        <dbReference type="ChEBI" id="CHEBI:60240"/>
    </ligand>
</feature>
<sequence>MRILIANDDGVTAPGIAALYDALADHADCVVIAPDQDKSGASSSLTLERPLHPQRLDNGFISLNGTPTDCVHLGLNGLLEELPDMVVSGINLGANLGDDVLYSGTVAAAIEGRFLKGPAFAFSLVSRLTDNLPTAMHFARLLVSAHERLAVPPRTVLNVNIPNLPLDRVRGIQLTRLGHRARAAAPVKVVNPRGKEGYWIAAAGDAEDGGPGTDFHAVMQGYVSITPLQLDRTFHEAFGGLDEWLGGLT</sequence>
<reference key="1">
    <citation type="journal article" date="2009" name="Genome Res.">
        <title>Newly introduced genomic prophage islands are critical determinants of in vivo competitiveness in the Liverpool epidemic strain of Pseudomonas aeruginosa.</title>
        <authorList>
            <person name="Winstanley C."/>
            <person name="Langille M.G.I."/>
            <person name="Fothergill J.L."/>
            <person name="Kukavica-Ibrulj I."/>
            <person name="Paradis-Bleau C."/>
            <person name="Sanschagrin F."/>
            <person name="Thomson N.R."/>
            <person name="Winsor G.L."/>
            <person name="Quail M.A."/>
            <person name="Lennard N."/>
            <person name="Bignell A."/>
            <person name="Clarke L."/>
            <person name="Seeger K."/>
            <person name="Saunders D."/>
            <person name="Harris D."/>
            <person name="Parkhill J."/>
            <person name="Hancock R.E.W."/>
            <person name="Brinkman F.S.L."/>
            <person name="Levesque R.C."/>
        </authorList>
    </citation>
    <scope>NUCLEOTIDE SEQUENCE [LARGE SCALE GENOMIC DNA]</scope>
    <source>
        <strain>LESB58</strain>
    </source>
</reference>
<gene>
    <name evidence="1" type="primary">surE</name>
    <name type="ordered locus">PLES_14101</name>
</gene>
<organism>
    <name type="scientific">Pseudomonas aeruginosa (strain LESB58)</name>
    <dbReference type="NCBI Taxonomy" id="557722"/>
    <lineage>
        <taxon>Bacteria</taxon>
        <taxon>Pseudomonadati</taxon>
        <taxon>Pseudomonadota</taxon>
        <taxon>Gammaproteobacteria</taxon>
        <taxon>Pseudomonadales</taxon>
        <taxon>Pseudomonadaceae</taxon>
        <taxon>Pseudomonas</taxon>
    </lineage>
</organism>
<evidence type="ECO:0000255" key="1">
    <source>
        <dbReference type="HAMAP-Rule" id="MF_00060"/>
    </source>
</evidence>
<accession>B7V8C4</accession>